<name>SYE1_CAMC1</name>
<proteinExistence type="inferred from homology"/>
<accession>A7ZCB6</accession>
<comment type="function">
    <text evidence="1">Catalyzes the attachment of glutamate to tRNA(Glu) in a two-step reaction: glutamate is first activated by ATP to form Glu-AMP and then transferred to the acceptor end of tRNA(Glu).</text>
</comment>
<comment type="catalytic activity">
    <reaction evidence="1">
        <text>tRNA(Glu) + L-glutamate + ATP = L-glutamyl-tRNA(Glu) + AMP + diphosphate</text>
        <dbReference type="Rhea" id="RHEA:23540"/>
        <dbReference type="Rhea" id="RHEA-COMP:9663"/>
        <dbReference type="Rhea" id="RHEA-COMP:9680"/>
        <dbReference type="ChEBI" id="CHEBI:29985"/>
        <dbReference type="ChEBI" id="CHEBI:30616"/>
        <dbReference type="ChEBI" id="CHEBI:33019"/>
        <dbReference type="ChEBI" id="CHEBI:78442"/>
        <dbReference type="ChEBI" id="CHEBI:78520"/>
        <dbReference type="ChEBI" id="CHEBI:456215"/>
        <dbReference type="EC" id="6.1.1.17"/>
    </reaction>
</comment>
<comment type="subunit">
    <text evidence="1">Monomer.</text>
</comment>
<comment type="subcellular location">
    <subcellularLocation>
        <location evidence="1">Cytoplasm</location>
    </subcellularLocation>
</comment>
<comment type="similarity">
    <text evidence="1">Belongs to the class-I aminoacyl-tRNA synthetase family. Glutamate--tRNA ligase type 1 subfamily.</text>
</comment>
<sequence length="431" mass="49431">MYRFAPSPTGDMHIGNLRAAIFNYICSLQDKSGFILRIEDTDKERNIEGKEKDILEILSKFGIKPEQIYIQSENLKFHRQLASKLLIDKKAFACFCTEEELEAKKQKAKEQGVAYRYDGTCERLSDAEVLNCEKPFVIRMKKPTRTMSFTDAIKGELSFEPDAVDSFVIMRADKTPTYNFACAVDDMLEGVTFVIRGEDHVSNTPKQDLIREGLGYTGKMNYAHLPILLNIEGKKMSKRENESSVKWLFEQGFLPEAIANYLILLGNKTPTEIFTIEDAVKWFDITKISRSPARFDVKKLEQINREHIKLASKERIKEIFGVDESKVELVKFYTQESSLVPEIKAKVEAIYSPKIAPDEYKNEFEIIKKAARNLKPCESFDEFKKELMGATNLKGKNFFMPLRALLTNDLHGPELSELYPLIKDDLAKILI</sequence>
<organism>
    <name type="scientific">Campylobacter concisus (strain 13826)</name>
    <dbReference type="NCBI Taxonomy" id="360104"/>
    <lineage>
        <taxon>Bacteria</taxon>
        <taxon>Pseudomonadati</taxon>
        <taxon>Campylobacterota</taxon>
        <taxon>Epsilonproteobacteria</taxon>
        <taxon>Campylobacterales</taxon>
        <taxon>Campylobacteraceae</taxon>
        <taxon>Campylobacter</taxon>
    </lineage>
</organism>
<reference key="1">
    <citation type="submission" date="2007-10" db="EMBL/GenBank/DDBJ databases">
        <title>Genome sequence of Campylobacter concisus 13826 isolated from human feces.</title>
        <authorList>
            <person name="Fouts D.E."/>
            <person name="Mongodin E.F."/>
            <person name="Puiu D."/>
            <person name="Sebastian Y."/>
            <person name="Miller W.G."/>
            <person name="Mandrell R.E."/>
            <person name="On S."/>
            <person name="Nelson K.E."/>
        </authorList>
    </citation>
    <scope>NUCLEOTIDE SEQUENCE [LARGE SCALE GENOMIC DNA]</scope>
    <source>
        <strain>13826</strain>
    </source>
</reference>
<feature type="chain" id="PRO_0000367633" description="Glutamate--tRNA ligase 1">
    <location>
        <begin position="1"/>
        <end position="431"/>
    </location>
</feature>
<feature type="short sequence motif" description="'HIGH' region" evidence="1">
    <location>
        <begin position="6"/>
        <end position="16"/>
    </location>
</feature>
<feature type="short sequence motif" description="'KMSKS' region" evidence="1">
    <location>
        <begin position="235"/>
        <end position="239"/>
    </location>
</feature>
<feature type="binding site" evidence="1">
    <location>
        <position position="238"/>
    </location>
    <ligand>
        <name>ATP</name>
        <dbReference type="ChEBI" id="CHEBI:30616"/>
    </ligand>
</feature>
<gene>
    <name evidence="1" type="primary">gltX1</name>
    <name type="ordered locus">Ccon26_05270</name>
    <name type="ORF">CCC13826_1548</name>
</gene>
<evidence type="ECO:0000255" key="1">
    <source>
        <dbReference type="HAMAP-Rule" id="MF_00022"/>
    </source>
</evidence>
<protein>
    <recommendedName>
        <fullName evidence="1">Glutamate--tRNA ligase 1</fullName>
        <ecNumber evidence="1">6.1.1.17</ecNumber>
    </recommendedName>
    <alternativeName>
        <fullName evidence="1">Glutamyl-tRNA synthetase 1</fullName>
        <shortName evidence="1">GluRS 1</shortName>
    </alternativeName>
</protein>
<keyword id="KW-0030">Aminoacyl-tRNA synthetase</keyword>
<keyword id="KW-0067">ATP-binding</keyword>
<keyword id="KW-0963">Cytoplasm</keyword>
<keyword id="KW-0436">Ligase</keyword>
<keyword id="KW-0547">Nucleotide-binding</keyword>
<keyword id="KW-0648">Protein biosynthesis</keyword>
<dbReference type="EC" id="6.1.1.17" evidence="1"/>
<dbReference type="EMBL" id="CP000792">
    <property type="protein sequence ID" value="EAT98942.1"/>
    <property type="molecule type" value="Genomic_DNA"/>
</dbReference>
<dbReference type="RefSeq" id="WP_012001399.1">
    <property type="nucleotide sequence ID" value="NC_009802.2"/>
</dbReference>
<dbReference type="SMR" id="A7ZCB6"/>
<dbReference type="STRING" id="360104.CCC13826_1548"/>
<dbReference type="KEGG" id="cco:CCC13826_1548"/>
<dbReference type="eggNOG" id="COG0008">
    <property type="taxonomic scope" value="Bacteria"/>
</dbReference>
<dbReference type="HOGENOM" id="CLU_015768_6_0_7"/>
<dbReference type="OrthoDB" id="9807503at2"/>
<dbReference type="Proteomes" id="UP000001121">
    <property type="component" value="Chromosome"/>
</dbReference>
<dbReference type="GO" id="GO:0005829">
    <property type="term" value="C:cytosol"/>
    <property type="evidence" value="ECO:0007669"/>
    <property type="project" value="TreeGrafter"/>
</dbReference>
<dbReference type="GO" id="GO:0005524">
    <property type="term" value="F:ATP binding"/>
    <property type="evidence" value="ECO:0007669"/>
    <property type="project" value="UniProtKB-UniRule"/>
</dbReference>
<dbReference type="GO" id="GO:0004818">
    <property type="term" value="F:glutamate-tRNA ligase activity"/>
    <property type="evidence" value="ECO:0007669"/>
    <property type="project" value="UniProtKB-UniRule"/>
</dbReference>
<dbReference type="GO" id="GO:0000049">
    <property type="term" value="F:tRNA binding"/>
    <property type="evidence" value="ECO:0007669"/>
    <property type="project" value="InterPro"/>
</dbReference>
<dbReference type="GO" id="GO:0006424">
    <property type="term" value="P:glutamyl-tRNA aminoacylation"/>
    <property type="evidence" value="ECO:0007669"/>
    <property type="project" value="UniProtKB-UniRule"/>
</dbReference>
<dbReference type="Gene3D" id="1.10.10.350">
    <property type="match status" value="1"/>
</dbReference>
<dbReference type="Gene3D" id="3.40.50.620">
    <property type="entry name" value="HUPs"/>
    <property type="match status" value="1"/>
</dbReference>
<dbReference type="HAMAP" id="MF_00022">
    <property type="entry name" value="Glu_tRNA_synth_type1"/>
    <property type="match status" value="1"/>
</dbReference>
<dbReference type="InterPro" id="IPR045462">
    <property type="entry name" value="aa-tRNA-synth_I_cd-bd"/>
</dbReference>
<dbReference type="InterPro" id="IPR020751">
    <property type="entry name" value="aa-tRNA-synth_I_codon-bd_sub2"/>
</dbReference>
<dbReference type="InterPro" id="IPR001412">
    <property type="entry name" value="aa-tRNA-synth_I_CS"/>
</dbReference>
<dbReference type="InterPro" id="IPR008925">
    <property type="entry name" value="aa_tRNA-synth_I_cd-bd_sf"/>
</dbReference>
<dbReference type="InterPro" id="IPR004527">
    <property type="entry name" value="Glu-tRNA-ligase_bac/mito"/>
</dbReference>
<dbReference type="InterPro" id="IPR000924">
    <property type="entry name" value="Glu/Gln-tRNA-synth"/>
</dbReference>
<dbReference type="InterPro" id="IPR020058">
    <property type="entry name" value="Glu/Gln-tRNA-synth_Ib_cat-dom"/>
</dbReference>
<dbReference type="InterPro" id="IPR049940">
    <property type="entry name" value="GluQ/Sye"/>
</dbReference>
<dbReference type="InterPro" id="IPR014729">
    <property type="entry name" value="Rossmann-like_a/b/a_fold"/>
</dbReference>
<dbReference type="NCBIfam" id="TIGR00464">
    <property type="entry name" value="gltX_bact"/>
    <property type="match status" value="1"/>
</dbReference>
<dbReference type="PANTHER" id="PTHR43311">
    <property type="entry name" value="GLUTAMATE--TRNA LIGASE"/>
    <property type="match status" value="1"/>
</dbReference>
<dbReference type="PANTHER" id="PTHR43311:SF2">
    <property type="entry name" value="GLUTAMATE--TRNA LIGASE, MITOCHONDRIAL-RELATED"/>
    <property type="match status" value="1"/>
</dbReference>
<dbReference type="Pfam" id="PF19269">
    <property type="entry name" value="Anticodon_2"/>
    <property type="match status" value="1"/>
</dbReference>
<dbReference type="Pfam" id="PF00749">
    <property type="entry name" value="tRNA-synt_1c"/>
    <property type="match status" value="1"/>
</dbReference>
<dbReference type="PRINTS" id="PR00987">
    <property type="entry name" value="TRNASYNTHGLU"/>
</dbReference>
<dbReference type="SUPFAM" id="SSF48163">
    <property type="entry name" value="An anticodon-binding domain of class I aminoacyl-tRNA synthetases"/>
    <property type="match status" value="1"/>
</dbReference>
<dbReference type="SUPFAM" id="SSF52374">
    <property type="entry name" value="Nucleotidylyl transferase"/>
    <property type="match status" value="1"/>
</dbReference>
<dbReference type="PROSITE" id="PS00178">
    <property type="entry name" value="AA_TRNA_LIGASE_I"/>
    <property type="match status" value="1"/>
</dbReference>